<accession>Q6K602</accession>
<accession>A0A0P0VJH8</accession>
<keyword id="KW-1003">Cell membrane</keyword>
<keyword id="KW-0472">Membrane</keyword>
<keyword id="KW-1185">Reference proteome</keyword>
<keyword id="KW-0677">Repeat</keyword>
<keyword id="KW-0762">Sugar transport</keyword>
<keyword id="KW-0812">Transmembrane</keyword>
<keyword id="KW-1133">Transmembrane helix</keyword>
<keyword id="KW-0813">Transport</keyword>
<dbReference type="EMBL" id="AP005299">
    <property type="protein sequence ID" value="BAD23245.1"/>
    <property type="molecule type" value="Genomic_DNA"/>
</dbReference>
<dbReference type="EMBL" id="AP008208">
    <property type="protein sequence ID" value="BAF08858.1"/>
    <property type="molecule type" value="Genomic_DNA"/>
</dbReference>
<dbReference type="EMBL" id="AP014958">
    <property type="protein sequence ID" value="BAS78874.1"/>
    <property type="molecule type" value="Genomic_DNA"/>
</dbReference>
<dbReference type="EMBL" id="CM000139">
    <property type="protein sequence ID" value="EEE57067.1"/>
    <property type="molecule type" value="Genomic_DNA"/>
</dbReference>
<dbReference type="EMBL" id="AK103266">
    <property type="protein sequence ID" value="BAG95984.1"/>
    <property type="molecule type" value="mRNA"/>
</dbReference>
<dbReference type="RefSeq" id="XP_015623673.1">
    <property type="nucleotide sequence ID" value="XM_015768187.1"/>
</dbReference>
<dbReference type="SMR" id="Q6K602"/>
<dbReference type="FunCoup" id="Q6K602">
    <property type="interactions" value="610"/>
</dbReference>
<dbReference type="STRING" id="39947.Q6K602"/>
<dbReference type="PaxDb" id="39947-Q6K602"/>
<dbReference type="EnsemblPlants" id="Os02t0513100-01">
    <property type="protein sequence ID" value="Os02t0513100-01"/>
    <property type="gene ID" value="Os02g0513100"/>
</dbReference>
<dbReference type="Gramene" id="Os02t0513100-01">
    <property type="protein sequence ID" value="Os02t0513100-01"/>
    <property type="gene ID" value="Os02g0513100"/>
</dbReference>
<dbReference type="KEGG" id="dosa:Os02g0513100"/>
<dbReference type="eggNOG" id="KOG1623">
    <property type="taxonomic scope" value="Eukaryota"/>
</dbReference>
<dbReference type="HOGENOM" id="CLU_048643_4_0_1"/>
<dbReference type="InParanoid" id="Q6K602"/>
<dbReference type="OMA" id="ERSTWAF"/>
<dbReference type="OrthoDB" id="409725at2759"/>
<dbReference type="Proteomes" id="UP000000763">
    <property type="component" value="Chromosome 2"/>
</dbReference>
<dbReference type="Proteomes" id="UP000007752">
    <property type="component" value="Chromosome 2"/>
</dbReference>
<dbReference type="Proteomes" id="UP000059680">
    <property type="component" value="Chromosome 2"/>
</dbReference>
<dbReference type="GO" id="GO:0016020">
    <property type="term" value="C:membrane"/>
    <property type="evidence" value="ECO:0000318"/>
    <property type="project" value="GO_Central"/>
</dbReference>
<dbReference type="GO" id="GO:0005886">
    <property type="term" value="C:plasma membrane"/>
    <property type="evidence" value="ECO:0000250"/>
    <property type="project" value="UniProtKB"/>
</dbReference>
<dbReference type="GO" id="GO:0051119">
    <property type="term" value="F:sugar transmembrane transporter activity"/>
    <property type="evidence" value="ECO:0000250"/>
    <property type="project" value="UniProtKB"/>
</dbReference>
<dbReference type="GO" id="GO:0008643">
    <property type="term" value="P:carbohydrate transport"/>
    <property type="evidence" value="ECO:0000318"/>
    <property type="project" value="GO_Central"/>
</dbReference>
<dbReference type="FunFam" id="1.20.1280.290:FF:000001">
    <property type="entry name" value="Bidirectional sugar transporter SWEET"/>
    <property type="match status" value="1"/>
</dbReference>
<dbReference type="FunFam" id="1.20.1280.290:FF:000003">
    <property type="entry name" value="Bidirectional sugar transporter SWEET"/>
    <property type="match status" value="1"/>
</dbReference>
<dbReference type="Gene3D" id="1.20.1280.290">
    <property type="match status" value="2"/>
</dbReference>
<dbReference type="InterPro" id="IPR047664">
    <property type="entry name" value="SWEET"/>
</dbReference>
<dbReference type="InterPro" id="IPR004316">
    <property type="entry name" value="SWEET_rpt"/>
</dbReference>
<dbReference type="PANTHER" id="PTHR10791:SF50">
    <property type="entry name" value="BIDIRECTIONAL SUGAR TRANSPORTER SWEET15"/>
    <property type="match status" value="1"/>
</dbReference>
<dbReference type="PANTHER" id="PTHR10791">
    <property type="entry name" value="RAG1-ACTIVATING PROTEIN 1"/>
    <property type="match status" value="1"/>
</dbReference>
<dbReference type="Pfam" id="PF03083">
    <property type="entry name" value="MtN3_slv"/>
    <property type="match status" value="2"/>
</dbReference>
<comment type="function">
    <text evidence="1">Mediates both low-affinity uptake and efflux of sugar across the plasma membrane.</text>
</comment>
<comment type="function">
    <text evidence="3 4">Confers blight susceptibility (PubMed:25988582). Confers TAL effector-mediated susceptibility to Xanthomonas oryzae pv. oryzae (PubMed:23879865).</text>
</comment>
<comment type="subunit">
    <text evidence="1">Forms homooligomers and/or heterooligomers.</text>
</comment>
<comment type="subcellular location">
    <subcellularLocation>
        <location evidence="1">Cell membrane</location>
        <topology evidence="1">Multi-pass membrane protein</topology>
    </subcellularLocation>
</comment>
<comment type="induction">
    <text evidence="3">By the X.oryzae pv. oryzae (Xoo) transcription activator-like effector (TALe) proteins (artificial TAL effectors).</text>
</comment>
<comment type="similarity">
    <text evidence="5">Belongs to the SWEET sugar transporter family.</text>
</comment>
<reference key="1">
    <citation type="journal article" date="2005" name="Nature">
        <title>The map-based sequence of the rice genome.</title>
        <authorList>
            <consortium name="International rice genome sequencing project (IRGSP)"/>
        </authorList>
    </citation>
    <scope>NUCLEOTIDE SEQUENCE [LARGE SCALE GENOMIC DNA]</scope>
    <source>
        <strain>cv. Nipponbare</strain>
    </source>
</reference>
<reference key="2">
    <citation type="journal article" date="2008" name="Nucleic Acids Res.">
        <title>The rice annotation project database (RAP-DB): 2008 update.</title>
        <authorList>
            <consortium name="The rice annotation project (RAP)"/>
        </authorList>
    </citation>
    <scope>GENOME REANNOTATION</scope>
    <source>
        <strain>cv. Nipponbare</strain>
    </source>
</reference>
<reference key="3">
    <citation type="journal article" date="2013" name="Rice">
        <title>Improvement of the Oryza sativa Nipponbare reference genome using next generation sequence and optical map data.</title>
        <authorList>
            <person name="Kawahara Y."/>
            <person name="de la Bastide M."/>
            <person name="Hamilton J.P."/>
            <person name="Kanamori H."/>
            <person name="McCombie W.R."/>
            <person name="Ouyang S."/>
            <person name="Schwartz D.C."/>
            <person name="Tanaka T."/>
            <person name="Wu J."/>
            <person name="Zhou S."/>
            <person name="Childs K.L."/>
            <person name="Davidson R.M."/>
            <person name="Lin H."/>
            <person name="Quesada-Ocampo L."/>
            <person name="Vaillancourt B."/>
            <person name="Sakai H."/>
            <person name="Lee S.S."/>
            <person name="Kim J."/>
            <person name="Numa H."/>
            <person name="Itoh T."/>
            <person name="Buell C.R."/>
            <person name="Matsumoto T."/>
        </authorList>
    </citation>
    <scope>GENOME REANNOTATION</scope>
    <source>
        <strain>cv. Nipponbare</strain>
    </source>
</reference>
<reference key="4">
    <citation type="journal article" date="2005" name="PLoS Biol.">
        <title>The genomes of Oryza sativa: a history of duplications.</title>
        <authorList>
            <person name="Yu J."/>
            <person name="Wang J."/>
            <person name="Lin W."/>
            <person name="Li S."/>
            <person name="Li H."/>
            <person name="Zhou J."/>
            <person name="Ni P."/>
            <person name="Dong W."/>
            <person name="Hu S."/>
            <person name="Zeng C."/>
            <person name="Zhang J."/>
            <person name="Zhang Y."/>
            <person name="Li R."/>
            <person name="Xu Z."/>
            <person name="Li S."/>
            <person name="Li X."/>
            <person name="Zheng H."/>
            <person name="Cong L."/>
            <person name="Lin L."/>
            <person name="Yin J."/>
            <person name="Geng J."/>
            <person name="Li G."/>
            <person name="Shi J."/>
            <person name="Liu J."/>
            <person name="Lv H."/>
            <person name="Li J."/>
            <person name="Wang J."/>
            <person name="Deng Y."/>
            <person name="Ran L."/>
            <person name="Shi X."/>
            <person name="Wang X."/>
            <person name="Wu Q."/>
            <person name="Li C."/>
            <person name="Ren X."/>
            <person name="Wang J."/>
            <person name="Wang X."/>
            <person name="Li D."/>
            <person name="Liu D."/>
            <person name="Zhang X."/>
            <person name="Ji Z."/>
            <person name="Zhao W."/>
            <person name="Sun Y."/>
            <person name="Zhang Z."/>
            <person name="Bao J."/>
            <person name="Han Y."/>
            <person name="Dong L."/>
            <person name="Ji J."/>
            <person name="Chen P."/>
            <person name="Wu S."/>
            <person name="Liu J."/>
            <person name="Xiao Y."/>
            <person name="Bu D."/>
            <person name="Tan J."/>
            <person name="Yang L."/>
            <person name="Ye C."/>
            <person name="Zhang J."/>
            <person name="Xu J."/>
            <person name="Zhou Y."/>
            <person name="Yu Y."/>
            <person name="Zhang B."/>
            <person name="Zhuang S."/>
            <person name="Wei H."/>
            <person name="Liu B."/>
            <person name="Lei M."/>
            <person name="Yu H."/>
            <person name="Li Y."/>
            <person name="Xu H."/>
            <person name="Wei S."/>
            <person name="He X."/>
            <person name="Fang L."/>
            <person name="Zhang Z."/>
            <person name="Zhang Y."/>
            <person name="Huang X."/>
            <person name="Su Z."/>
            <person name="Tong W."/>
            <person name="Li J."/>
            <person name="Tong Z."/>
            <person name="Li S."/>
            <person name="Ye J."/>
            <person name="Wang L."/>
            <person name="Fang L."/>
            <person name="Lei T."/>
            <person name="Chen C.-S."/>
            <person name="Chen H.-C."/>
            <person name="Xu Z."/>
            <person name="Li H."/>
            <person name="Huang H."/>
            <person name="Zhang F."/>
            <person name="Xu H."/>
            <person name="Li N."/>
            <person name="Zhao C."/>
            <person name="Li S."/>
            <person name="Dong L."/>
            <person name="Huang Y."/>
            <person name="Li L."/>
            <person name="Xi Y."/>
            <person name="Qi Q."/>
            <person name="Li W."/>
            <person name="Zhang B."/>
            <person name="Hu W."/>
            <person name="Zhang Y."/>
            <person name="Tian X."/>
            <person name="Jiao Y."/>
            <person name="Liang X."/>
            <person name="Jin J."/>
            <person name="Gao L."/>
            <person name="Zheng W."/>
            <person name="Hao B."/>
            <person name="Liu S.-M."/>
            <person name="Wang W."/>
            <person name="Yuan L."/>
            <person name="Cao M."/>
            <person name="McDermott J."/>
            <person name="Samudrala R."/>
            <person name="Wang J."/>
            <person name="Wong G.K.-S."/>
            <person name="Yang H."/>
        </authorList>
    </citation>
    <scope>NUCLEOTIDE SEQUENCE [LARGE SCALE GENOMIC DNA]</scope>
    <source>
        <strain>cv. Nipponbare</strain>
    </source>
</reference>
<reference key="5">
    <citation type="journal article" date="2003" name="Science">
        <title>Collection, mapping, and annotation of over 28,000 cDNA clones from japonica rice.</title>
        <authorList>
            <consortium name="The rice full-length cDNA consortium"/>
        </authorList>
    </citation>
    <scope>NUCLEOTIDE SEQUENCE [LARGE SCALE MRNA]</scope>
    <source>
        <strain>cv. Nipponbare</strain>
    </source>
</reference>
<reference key="6">
    <citation type="journal article" date="2010" name="Nature">
        <title>Sugar transporters for intercellular exchange and nutrition of pathogens.</title>
        <authorList>
            <person name="Chen L.-Q."/>
            <person name="Hou B.-H."/>
            <person name="Lalonde S."/>
            <person name="Takanaga H."/>
            <person name="Hartung M.L."/>
            <person name="Qu X.-Q."/>
            <person name="Guo W.-J."/>
            <person name="Kim J.-G."/>
            <person name="Underwood W."/>
            <person name="Chaudhuri B."/>
            <person name="Chermak D."/>
            <person name="Antony G."/>
            <person name="White F.F."/>
            <person name="Somerville S.C."/>
            <person name="Mudgett M.B."/>
            <person name="Frommer W.B."/>
        </authorList>
    </citation>
    <scope>GENE FAMILY</scope>
    <scope>NOMENCLATURE</scope>
</reference>
<reference key="7">
    <citation type="journal article" date="2013" name="New Phytol.">
        <title>Five phylogenetically close rice SWEET genes confer TAL effector-mediated susceptibility to Xanthomonas oryzae pv. oryzae.</title>
        <authorList>
            <person name="Streubel J."/>
            <person name="Pesce C."/>
            <person name="Hutin M."/>
            <person name="Koebnik R."/>
            <person name="Boch J."/>
            <person name="Szurek B."/>
        </authorList>
    </citation>
    <scope>FUNCTION</scope>
    <scope>INDUCTION BY TAL PROTEINS</scope>
    <source>
        <strain>cv. Nipponbare</strain>
    </source>
</reference>
<reference key="8">
    <citation type="journal article" date="2015" name="Curr. Opin. Plant Biol.">
        <title>SWEETs, transporters for intracellular and intercellular sugar translocation.</title>
        <authorList>
            <person name="Eom J.-S."/>
            <person name="Chen L.-Q."/>
            <person name="Sosso D."/>
            <person name="Julius B.T."/>
            <person name="Lin I.W."/>
            <person name="Qu X.-Q."/>
            <person name="Braun D.M."/>
            <person name="Frommer W.B."/>
        </authorList>
    </citation>
    <scope>REVIEW</scope>
</reference>
<gene>
    <name type="primary">SWEET15</name>
    <name type="ordered locus">Os02g0513100</name>
    <name type="ordered locus">LOC_Os02g30910</name>
    <name type="ORF">OJ1789_D08.23</name>
    <name type="ORF">OsJ_06889</name>
</gene>
<protein>
    <recommendedName>
        <fullName>Bidirectional sugar transporter SWEET15</fullName>
        <shortName>OsSWEET15</shortName>
    </recommendedName>
</protein>
<evidence type="ECO:0000250" key="1">
    <source>
        <dbReference type="UniProtKB" id="Q8L9J7"/>
    </source>
</evidence>
<evidence type="ECO:0000255" key="2"/>
<evidence type="ECO:0000269" key="3">
    <source>
    </source>
</evidence>
<evidence type="ECO:0000303" key="4">
    <source>
    </source>
</evidence>
<evidence type="ECO:0000305" key="5"/>
<sequence>MAFMSMERSTWAFTFGILGNLISLMVFLSPLPTFYRVYRKKSTEGFQSTPYVVTLFSCMLWMYYAFVKSGAELLVTINGVGCVIETVYLAMYLAYAPKSARMLTAKMLLGLNIGLFGVIALVTLLLSRGELRVHVLGWICVAVSLSVFAAPLSIIRLVIRTKSVEFMPFSLSFFLVLSAVIWFLYGLLKKDVFVALPNVLGFVFGVAQMALYMAYRSKKPLVASSSSAVVAAGLEIKLPEHVKEVQAVAKGAVAAAPEGRISCGAEVHPIDDVMPSEVVEVKVDDEETNRTDEMAGDGDHAMVRTEQIIKPDMAIVVEV</sequence>
<name>SWT15_ORYSJ</name>
<feature type="chain" id="PRO_0000404137" description="Bidirectional sugar transporter SWEET15">
    <location>
        <begin position="1"/>
        <end position="319"/>
    </location>
</feature>
<feature type="topological domain" description="Extracellular" evidence="2">
    <location>
        <begin position="1"/>
        <end position="10"/>
    </location>
</feature>
<feature type="transmembrane region" description="Helical; Name=1" evidence="2">
    <location>
        <begin position="11"/>
        <end position="31"/>
    </location>
</feature>
<feature type="topological domain" description="Cytoplasmic" evidence="2">
    <location>
        <begin position="32"/>
        <end position="50"/>
    </location>
</feature>
<feature type="transmembrane region" description="Helical; Name=2" evidence="2">
    <location>
        <begin position="51"/>
        <end position="71"/>
    </location>
</feature>
<feature type="topological domain" description="Extracellular" evidence="2">
    <location>
        <position position="72"/>
    </location>
</feature>
<feature type="transmembrane region" description="Helical; Name=3" evidence="2">
    <location>
        <begin position="73"/>
        <end position="93"/>
    </location>
</feature>
<feature type="topological domain" description="Cytoplasmic" evidence="2">
    <location>
        <begin position="94"/>
        <end position="106"/>
    </location>
</feature>
<feature type="transmembrane region" description="Helical; Name=4" evidence="2">
    <location>
        <begin position="107"/>
        <end position="127"/>
    </location>
</feature>
<feature type="topological domain" description="Extracellular" evidence="2">
    <location>
        <begin position="128"/>
        <end position="134"/>
    </location>
</feature>
<feature type="transmembrane region" description="Helical; Name=5" evidence="2">
    <location>
        <begin position="135"/>
        <end position="155"/>
    </location>
</feature>
<feature type="topological domain" description="Cytoplasmic" evidence="2">
    <location>
        <begin position="156"/>
        <end position="167"/>
    </location>
</feature>
<feature type="transmembrane region" description="Helical; Name=6" evidence="2">
    <location>
        <begin position="168"/>
        <end position="188"/>
    </location>
</feature>
<feature type="topological domain" description="Extracellular" evidence="2">
    <location>
        <begin position="189"/>
        <end position="191"/>
    </location>
</feature>
<feature type="transmembrane region" description="Helical; Name=7" evidence="2">
    <location>
        <begin position="192"/>
        <end position="212"/>
    </location>
</feature>
<feature type="topological domain" description="Cytoplasmic" evidence="2">
    <location>
        <begin position="213"/>
        <end position="319"/>
    </location>
</feature>
<feature type="domain" description="MtN3/slv 1">
    <location>
        <begin position="13"/>
        <end position="99"/>
    </location>
</feature>
<feature type="domain" description="MtN3/slv 2">
    <location>
        <begin position="135"/>
        <end position="219"/>
    </location>
</feature>
<proteinExistence type="evidence at transcript level"/>
<organism>
    <name type="scientific">Oryza sativa subsp. japonica</name>
    <name type="common">Rice</name>
    <dbReference type="NCBI Taxonomy" id="39947"/>
    <lineage>
        <taxon>Eukaryota</taxon>
        <taxon>Viridiplantae</taxon>
        <taxon>Streptophyta</taxon>
        <taxon>Embryophyta</taxon>
        <taxon>Tracheophyta</taxon>
        <taxon>Spermatophyta</taxon>
        <taxon>Magnoliopsida</taxon>
        <taxon>Liliopsida</taxon>
        <taxon>Poales</taxon>
        <taxon>Poaceae</taxon>
        <taxon>BOP clade</taxon>
        <taxon>Oryzoideae</taxon>
        <taxon>Oryzeae</taxon>
        <taxon>Oryzinae</taxon>
        <taxon>Oryza</taxon>
        <taxon>Oryza sativa</taxon>
    </lineage>
</organism>